<gene>
    <name evidence="1" type="primary">rplQ</name>
    <name type="synonym">rl17</name>
    <name type="ordered locus">CT_506</name>
</gene>
<reference key="1">
    <citation type="journal article" date="1998" name="Science">
        <title>Genome sequence of an obligate intracellular pathogen of humans: Chlamydia trachomatis.</title>
        <authorList>
            <person name="Stephens R.S."/>
            <person name="Kalman S."/>
            <person name="Lammel C.J."/>
            <person name="Fan J."/>
            <person name="Marathe R."/>
            <person name="Aravind L."/>
            <person name="Mitchell W.P."/>
            <person name="Olinger L."/>
            <person name="Tatusov R.L."/>
            <person name="Zhao Q."/>
            <person name="Koonin E.V."/>
            <person name="Davis R.W."/>
        </authorList>
    </citation>
    <scope>NUCLEOTIDE SEQUENCE [LARGE SCALE GENOMIC DNA]</scope>
    <source>
        <strain>ATCC VR-885 / DSM 19411 / UW-3/Cx</strain>
    </source>
</reference>
<evidence type="ECO:0000255" key="1">
    <source>
        <dbReference type="HAMAP-Rule" id="MF_01368"/>
    </source>
</evidence>
<evidence type="ECO:0000305" key="2"/>
<keyword id="KW-1185">Reference proteome</keyword>
<keyword id="KW-0687">Ribonucleoprotein</keyword>
<keyword id="KW-0689">Ribosomal protein</keyword>
<protein>
    <recommendedName>
        <fullName evidence="1">Large ribosomal subunit protein bL17</fullName>
    </recommendedName>
    <alternativeName>
        <fullName evidence="2">50S ribosomal protein L17</fullName>
    </alternativeName>
</protein>
<dbReference type="EMBL" id="AE001273">
    <property type="protein sequence ID" value="AAC68107.1"/>
    <property type="molecule type" value="Genomic_DNA"/>
</dbReference>
<dbReference type="PIR" id="H71504">
    <property type="entry name" value="H71504"/>
</dbReference>
<dbReference type="RefSeq" id="NP_220021.1">
    <property type="nucleotide sequence ID" value="NC_000117.1"/>
</dbReference>
<dbReference type="RefSeq" id="WP_009871870.1">
    <property type="nucleotide sequence ID" value="NC_000117.1"/>
</dbReference>
<dbReference type="SMR" id="P0CD84"/>
<dbReference type="FunCoup" id="P0CD84">
    <property type="interactions" value="264"/>
</dbReference>
<dbReference type="STRING" id="272561.CT_506"/>
<dbReference type="EnsemblBacteria" id="AAC68107">
    <property type="protein sequence ID" value="AAC68107"/>
    <property type="gene ID" value="CT_506"/>
</dbReference>
<dbReference type="GeneID" id="884282"/>
<dbReference type="KEGG" id="ctr:CT_506"/>
<dbReference type="PATRIC" id="fig|272561.5.peg.550"/>
<dbReference type="HOGENOM" id="CLU_074407_2_0_0"/>
<dbReference type="InParanoid" id="P0CD84"/>
<dbReference type="OrthoDB" id="9809073at2"/>
<dbReference type="Proteomes" id="UP000000431">
    <property type="component" value="Chromosome"/>
</dbReference>
<dbReference type="GO" id="GO:0022625">
    <property type="term" value="C:cytosolic large ribosomal subunit"/>
    <property type="evidence" value="ECO:0000318"/>
    <property type="project" value="GO_Central"/>
</dbReference>
<dbReference type="GO" id="GO:0003735">
    <property type="term" value="F:structural constituent of ribosome"/>
    <property type="evidence" value="ECO:0000318"/>
    <property type="project" value="GO_Central"/>
</dbReference>
<dbReference type="GO" id="GO:0006412">
    <property type="term" value="P:translation"/>
    <property type="evidence" value="ECO:0007669"/>
    <property type="project" value="UniProtKB-UniRule"/>
</dbReference>
<dbReference type="FunFam" id="3.90.1030.10:FF:000003">
    <property type="entry name" value="50S ribosomal protein L17"/>
    <property type="match status" value="1"/>
</dbReference>
<dbReference type="Gene3D" id="3.90.1030.10">
    <property type="entry name" value="Ribosomal protein L17"/>
    <property type="match status" value="1"/>
</dbReference>
<dbReference type="HAMAP" id="MF_01368">
    <property type="entry name" value="Ribosomal_bL17"/>
    <property type="match status" value="1"/>
</dbReference>
<dbReference type="InterPro" id="IPR000456">
    <property type="entry name" value="Ribosomal_bL17"/>
</dbReference>
<dbReference type="InterPro" id="IPR047859">
    <property type="entry name" value="Ribosomal_bL17_CS"/>
</dbReference>
<dbReference type="InterPro" id="IPR036373">
    <property type="entry name" value="Ribosomal_bL17_sf"/>
</dbReference>
<dbReference type="NCBIfam" id="TIGR00059">
    <property type="entry name" value="L17"/>
    <property type="match status" value="1"/>
</dbReference>
<dbReference type="PANTHER" id="PTHR14413:SF16">
    <property type="entry name" value="LARGE RIBOSOMAL SUBUNIT PROTEIN BL17M"/>
    <property type="match status" value="1"/>
</dbReference>
<dbReference type="PANTHER" id="PTHR14413">
    <property type="entry name" value="RIBOSOMAL PROTEIN L17"/>
    <property type="match status" value="1"/>
</dbReference>
<dbReference type="Pfam" id="PF01196">
    <property type="entry name" value="Ribosomal_L17"/>
    <property type="match status" value="1"/>
</dbReference>
<dbReference type="SUPFAM" id="SSF64263">
    <property type="entry name" value="Prokaryotic ribosomal protein L17"/>
    <property type="match status" value="1"/>
</dbReference>
<dbReference type="PROSITE" id="PS01167">
    <property type="entry name" value="RIBOSOMAL_L17"/>
    <property type="match status" value="1"/>
</dbReference>
<organism>
    <name type="scientific">Chlamydia trachomatis serovar D (strain ATCC VR-885 / DSM 19411 / UW-3/Cx)</name>
    <dbReference type="NCBI Taxonomy" id="272561"/>
    <lineage>
        <taxon>Bacteria</taxon>
        <taxon>Pseudomonadati</taxon>
        <taxon>Chlamydiota</taxon>
        <taxon>Chlamydiia</taxon>
        <taxon>Chlamydiales</taxon>
        <taxon>Chlamydiaceae</taxon>
        <taxon>Chlamydia/Chlamydophila group</taxon>
        <taxon>Chlamydia</taxon>
    </lineage>
</organism>
<name>RL17_CHLTR</name>
<accession>P0CD84</accession>
<accession>O84514</accession>
<accession>P47760</accession>
<sequence>MQHARKKFRVGRTSSHNRCMLANMLKSLIHNERIETTLPKAKELRRHADKMITLAKKNTLAARRLAVGRLMVRYNTLTSKEARQVKAGDLSAYNVDRRVIGKLFDVLATRFSSRNGGYTRILKLQNRVGDNAQKCIIEFLA</sequence>
<feature type="chain" id="PRO_0000175522" description="Large ribosomal subunit protein bL17">
    <location>
        <begin position="1"/>
        <end position="141"/>
    </location>
</feature>
<comment type="subunit">
    <text evidence="1">Part of the 50S ribosomal subunit. Contacts protein L32.</text>
</comment>
<comment type="similarity">
    <text evidence="1">Belongs to the bacterial ribosomal protein bL17 family.</text>
</comment>
<proteinExistence type="inferred from homology"/>